<reference key="1">
    <citation type="journal article" date="2009" name="PLoS Genet.">
        <title>Organised genome dynamics in the Escherichia coli species results in highly diverse adaptive paths.</title>
        <authorList>
            <person name="Touchon M."/>
            <person name="Hoede C."/>
            <person name="Tenaillon O."/>
            <person name="Barbe V."/>
            <person name="Baeriswyl S."/>
            <person name="Bidet P."/>
            <person name="Bingen E."/>
            <person name="Bonacorsi S."/>
            <person name="Bouchier C."/>
            <person name="Bouvet O."/>
            <person name="Calteau A."/>
            <person name="Chiapello H."/>
            <person name="Clermont O."/>
            <person name="Cruveiller S."/>
            <person name="Danchin A."/>
            <person name="Diard M."/>
            <person name="Dossat C."/>
            <person name="Karoui M.E."/>
            <person name="Frapy E."/>
            <person name="Garry L."/>
            <person name="Ghigo J.M."/>
            <person name="Gilles A.M."/>
            <person name="Johnson J."/>
            <person name="Le Bouguenec C."/>
            <person name="Lescat M."/>
            <person name="Mangenot S."/>
            <person name="Martinez-Jehanne V."/>
            <person name="Matic I."/>
            <person name="Nassif X."/>
            <person name="Oztas S."/>
            <person name="Petit M.A."/>
            <person name="Pichon C."/>
            <person name="Rouy Z."/>
            <person name="Ruf C.S."/>
            <person name="Schneider D."/>
            <person name="Tourret J."/>
            <person name="Vacherie B."/>
            <person name="Vallenet D."/>
            <person name="Medigue C."/>
            <person name="Rocha E.P.C."/>
            <person name="Denamur E."/>
        </authorList>
    </citation>
    <scope>NUCLEOTIDE SEQUENCE [LARGE SCALE GENOMIC DNA]</scope>
    <source>
        <strain>ED1a</strain>
    </source>
</reference>
<keyword id="KW-0963">Cytoplasm</keyword>
<keyword id="KW-0671">Queuosine biosynthesis</keyword>
<keyword id="KW-0949">S-adenosyl-L-methionine</keyword>
<keyword id="KW-0808">Transferase</keyword>
<protein>
    <recommendedName>
        <fullName evidence="1">S-adenosylmethionine:tRNA ribosyltransferase-isomerase</fullName>
        <ecNumber evidence="1">2.4.99.17</ecNumber>
    </recommendedName>
    <alternativeName>
        <fullName evidence="1">Queuosine biosynthesis protein QueA</fullName>
    </alternativeName>
</protein>
<dbReference type="EC" id="2.4.99.17" evidence="1"/>
<dbReference type="EMBL" id="CU928162">
    <property type="protein sequence ID" value="CAR06638.1"/>
    <property type="molecule type" value="Genomic_DNA"/>
</dbReference>
<dbReference type="RefSeq" id="WP_001266484.1">
    <property type="nucleotide sequence ID" value="NC_011745.1"/>
</dbReference>
<dbReference type="SMR" id="B7MPG6"/>
<dbReference type="KEGG" id="ecq:ECED1_0428"/>
<dbReference type="HOGENOM" id="CLU_039110_1_0_6"/>
<dbReference type="UniPathway" id="UPA00392"/>
<dbReference type="Proteomes" id="UP000000748">
    <property type="component" value="Chromosome"/>
</dbReference>
<dbReference type="GO" id="GO:0005737">
    <property type="term" value="C:cytoplasm"/>
    <property type="evidence" value="ECO:0007669"/>
    <property type="project" value="UniProtKB-SubCell"/>
</dbReference>
<dbReference type="GO" id="GO:0051075">
    <property type="term" value="F:S-adenosylmethionine:tRNA ribosyltransferase-isomerase activity"/>
    <property type="evidence" value="ECO:0007669"/>
    <property type="project" value="UniProtKB-EC"/>
</dbReference>
<dbReference type="GO" id="GO:0008616">
    <property type="term" value="P:queuosine biosynthetic process"/>
    <property type="evidence" value="ECO:0007669"/>
    <property type="project" value="UniProtKB-UniRule"/>
</dbReference>
<dbReference type="GO" id="GO:0002099">
    <property type="term" value="P:tRNA wobble guanine modification"/>
    <property type="evidence" value="ECO:0007669"/>
    <property type="project" value="TreeGrafter"/>
</dbReference>
<dbReference type="FunFam" id="2.40.10.240:FF:000001">
    <property type="entry name" value="S-adenosylmethionine:tRNA ribosyltransferase-isomerase"/>
    <property type="match status" value="1"/>
</dbReference>
<dbReference type="FunFam" id="3.40.1780.10:FF:000001">
    <property type="entry name" value="S-adenosylmethionine:tRNA ribosyltransferase-isomerase"/>
    <property type="match status" value="1"/>
</dbReference>
<dbReference type="Gene3D" id="2.40.10.240">
    <property type="entry name" value="QueA-like"/>
    <property type="match status" value="1"/>
</dbReference>
<dbReference type="Gene3D" id="3.40.1780.10">
    <property type="entry name" value="QueA-like"/>
    <property type="match status" value="1"/>
</dbReference>
<dbReference type="HAMAP" id="MF_00113">
    <property type="entry name" value="QueA"/>
    <property type="match status" value="1"/>
</dbReference>
<dbReference type="InterPro" id="IPR003699">
    <property type="entry name" value="QueA"/>
</dbReference>
<dbReference type="InterPro" id="IPR042118">
    <property type="entry name" value="QueA_dom1"/>
</dbReference>
<dbReference type="InterPro" id="IPR042119">
    <property type="entry name" value="QueA_dom2"/>
</dbReference>
<dbReference type="InterPro" id="IPR036100">
    <property type="entry name" value="QueA_sf"/>
</dbReference>
<dbReference type="NCBIfam" id="NF001140">
    <property type="entry name" value="PRK00147.1"/>
    <property type="match status" value="1"/>
</dbReference>
<dbReference type="NCBIfam" id="TIGR00113">
    <property type="entry name" value="queA"/>
    <property type="match status" value="1"/>
</dbReference>
<dbReference type="PANTHER" id="PTHR30307">
    <property type="entry name" value="S-ADENOSYLMETHIONINE:TRNA RIBOSYLTRANSFERASE-ISOMERASE"/>
    <property type="match status" value="1"/>
</dbReference>
<dbReference type="PANTHER" id="PTHR30307:SF0">
    <property type="entry name" value="S-ADENOSYLMETHIONINE:TRNA RIBOSYLTRANSFERASE-ISOMERASE"/>
    <property type="match status" value="1"/>
</dbReference>
<dbReference type="Pfam" id="PF02547">
    <property type="entry name" value="Queuosine_synth"/>
    <property type="match status" value="1"/>
</dbReference>
<dbReference type="SUPFAM" id="SSF111337">
    <property type="entry name" value="QueA-like"/>
    <property type="match status" value="1"/>
</dbReference>
<comment type="function">
    <text evidence="1">Transfers and isomerizes the ribose moiety from AdoMet to the 7-aminomethyl group of 7-deazaguanine (preQ1-tRNA) to give epoxyqueuosine (oQ-tRNA).</text>
</comment>
<comment type="catalytic activity">
    <reaction evidence="1">
        <text>7-aminomethyl-7-carbaguanosine(34) in tRNA + S-adenosyl-L-methionine = epoxyqueuosine(34) in tRNA + adenine + L-methionine + 2 H(+)</text>
        <dbReference type="Rhea" id="RHEA:32155"/>
        <dbReference type="Rhea" id="RHEA-COMP:10342"/>
        <dbReference type="Rhea" id="RHEA-COMP:18582"/>
        <dbReference type="ChEBI" id="CHEBI:15378"/>
        <dbReference type="ChEBI" id="CHEBI:16708"/>
        <dbReference type="ChEBI" id="CHEBI:57844"/>
        <dbReference type="ChEBI" id="CHEBI:59789"/>
        <dbReference type="ChEBI" id="CHEBI:82833"/>
        <dbReference type="ChEBI" id="CHEBI:194443"/>
        <dbReference type="EC" id="2.4.99.17"/>
    </reaction>
</comment>
<comment type="pathway">
    <text evidence="1">tRNA modification; tRNA-queuosine biosynthesis.</text>
</comment>
<comment type="subunit">
    <text evidence="1">Monomer.</text>
</comment>
<comment type="subcellular location">
    <subcellularLocation>
        <location evidence="1">Cytoplasm</location>
    </subcellularLocation>
</comment>
<comment type="similarity">
    <text evidence="1">Belongs to the QueA family.</text>
</comment>
<name>QUEA_ECO81</name>
<feature type="chain" id="PRO_1000119153" description="S-adenosylmethionine:tRNA ribosyltransferase-isomerase">
    <location>
        <begin position="1"/>
        <end position="356"/>
    </location>
</feature>
<gene>
    <name evidence="1" type="primary">queA</name>
    <name type="ordered locus">ECED1_0428</name>
</gene>
<proteinExistence type="inferred from homology"/>
<organism>
    <name type="scientific">Escherichia coli O81 (strain ED1a)</name>
    <dbReference type="NCBI Taxonomy" id="585397"/>
    <lineage>
        <taxon>Bacteria</taxon>
        <taxon>Pseudomonadati</taxon>
        <taxon>Pseudomonadota</taxon>
        <taxon>Gammaproteobacteria</taxon>
        <taxon>Enterobacterales</taxon>
        <taxon>Enterobacteriaceae</taxon>
        <taxon>Escherichia</taxon>
    </lineage>
</organism>
<evidence type="ECO:0000255" key="1">
    <source>
        <dbReference type="HAMAP-Rule" id="MF_00113"/>
    </source>
</evidence>
<accession>B7MPG6</accession>
<sequence length="356" mass="39464">MRVTDFSFELPESLIAHYPMPERSSCRLLSLDGPTGALTHGTFTDLLDKLNPGDLLVFNNTRVIPARLFGRKASGGKIEVLVERMLDDKRIFAHIRASKAPKPGAELLLGDDESINATMTARHGALFEVEFNDQRSVLDILNSIGHMPLPPYIDRPDEDADRELYQTVYSEKPGAVAAPTAGLHFDEPLLEKLRAKGVEMAFVTLHVGAGTFQPVRVDTIEDHIMHSEYAEVPQDVVDAVLAAKARGNRVIAVGTTSVRSLESAAQAAKNDLIEPFFDDTQIFIYPGFQYKVVDALVTNFHLPESTLIMLVSAFAGYQHTMNAYKAAVEEKYRFFSYGDAMFITYNPQAINERVGE</sequence>